<sequence length="731" mass="78884">MSADVSTTPAAENVNGAAEASPAPAAAAPSATTPEVTAVENSTPAPAANQPHSASLYVGELDPSVTEAMLYELFSSIGQVASIRVCRDAVTRRSLGYAYVNYNNTADGERALEDLNYTLIKGKPCRIMWSQRDPALRKTGQGNVFIKNLDSAIDNKALHDTFAAFGNILSCKVAQDEFGNSKGYGFVHYETAEAANNAIKHVNGMLLNDKKVFVGHHISKKDRQSKFEEMKANFTNVYIKNLDSEIDDDEFRKMFEKFGEITSATLSRDQEGKSRGFGFVNFSTHESAQAAVEEMNDKEIRSQKLYVGRAQKKHEREEELRKQYEAARLEKASKYQGVNLYVKNLTDDIDDEKLRELFGPYGTITSAKVMRDTNVERDQSPDSAGKEKEADKENDKEATPEAEKAEKAEEKPSESSEEKDKEAKKSDKKPFGKSKGFGFVCFSSPDEASKAVTEMNQRMVNGKPLYVALAQRKDVRRSQLEASIQARNTIRQQQAAAAAGMPQPYMQPAVFYGPGQQGFIPGGQRGMAFPPQPGMVMGIPGGRPGQYPGPFPGQQGGRGMGPNQQIPPNFAQGIPMGMQGPGGIPNGMGYPQMAQVQFGRGAGGRGQVPGMPMGQGMRGGPGYGQGRGAPVQQGQMRPGQGGRGQNAAAPAGPQEGAAGGVNAQTLGAAPPAQQKQMLGEALYPKIQAQQPELAGKITGMLLEMDNTELLSLTRKPCAPRSMRPLAFTMST</sequence>
<reference key="1">
    <citation type="journal article" date="2007" name="Nat. Biotechnol.">
        <title>Genome sequencing and analysis of the versatile cell factory Aspergillus niger CBS 513.88.</title>
        <authorList>
            <person name="Pel H.J."/>
            <person name="de Winde J.H."/>
            <person name="Archer D.B."/>
            <person name="Dyer P.S."/>
            <person name="Hofmann G."/>
            <person name="Schaap P.J."/>
            <person name="Turner G."/>
            <person name="de Vries R.P."/>
            <person name="Albang R."/>
            <person name="Albermann K."/>
            <person name="Andersen M.R."/>
            <person name="Bendtsen J.D."/>
            <person name="Benen J.A.E."/>
            <person name="van den Berg M."/>
            <person name="Breestraat S."/>
            <person name="Caddick M.X."/>
            <person name="Contreras R."/>
            <person name="Cornell M."/>
            <person name="Coutinho P.M."/>
            <person name="Danchin E.G.J."/>
            <person name="Debets A.J.M."/>
            <person name="Dekker P."/>
            <person name="van Dijck P.W.M."/>
            <person name="van Dijk A."/>
            <person name="Dijkhuizen L."/>
            <person name="Driessen A.J.M."/>
            <person name="d'Enfert C."/>
            <person name="Geysens S."/>
            <person name="Goosen C."/>
            <person name="Groot G.S.P."/>
            <person name="de Groot P.W.J."/>
            <person name="Guillemette T."/>
            <person name="Henrissat B."/>
            <person name="Herweijer M."/>
            <person name="van den Hombergh J.P.T.W."/>
            <person name="van den Hondel C.A.M.J.J."/>
            <person name="van der Heijden R.T.J.M."/>
            <person name="van der Kaaij R.M."/>
            <person name="Klis F.M."/>
            <person name="Kools H.J."/>
            <person name="Kubicek C.P."/>
            <person name="van Kuyk P.A."/>
            <person name="Lauber J."/>
            <person name="Lu X."/>
            <person name="van der Maarel M.J.E.C."/>
            <person name="Meulenberg R."/>
            <person name="Menke H."/>
            <person name="Mortimer M.A."/>
            <person name="Nielsen J."/>
            <person name="Oliver S.G."/>
            <person name="Olsthoorn M."/>
            <person name="Pal K."/>
            <person name="van Peij N.N.M.E."/>
            <person name="Ram A.F.J."/>
            <person name="Rinas U."/>
            <person name="Roubos J.A."/>
            <person name="Sagt C.M.J."/>
            <person name="Schmoll M."/>
            <person name="Sun J."/>
            <person name="Ussery D."/>
            <person name="Varga J."/>
            <person name="Vervecken W."/>
            <person name="van de Vondervoort P.J.J."/>
            <person name="Wedler H."/>
            <person name="Woesten H.A.B."/>
            <person name="Zeng A.-P."/>
            <person name="van Ooyen A.J.J."/>
            <person name="Visser J."/>
            <person name="Stam H."/>
        </authorList>
    </citation>
    <scope>NUCLEOTIDE SEQUENCE [LARGE SCALE GENOMIC DNA]</scope>
    <source>
        <strain>ATCC MYA-4892 / CBS 513.88 / FGSC A1513</strain>
    </source>
</reference>
<evidence type="ECO:0000250" key="1"/>
<evidence type="ECO:0000255" key="2">
    <source>
        <dbReference type="PROSITE-ProRule" id="PRU00176"/>
    </source>
</evidence>
<evidence type="ECO:0000255" key="3">
    <source>
        <dbReference type="PROSITE-ProRule" id="PRU00641"/>
    </source>
</evidence>
<evidence type="ECO:0000256" key="4">
    <source>
        <dbReference type="SAM" id="MobiDB-lite"/>
    </source>
</evidence>
<evidence type="ECO:0000305" key="5"/>
<proteinExistence type="inferred from homology"/>
<accession>A2Q848</accession>
<gene>
    <name type="primary">pab1</name>
    <name type="ORF">An01g03050</name>
</gene>
<name>PABP_ASPNC</name>
<organism>
    <name type="scientific">Aspergillus niger (strain ATCC MYA-4892 / CBS 513.88 / FGSC A1513)</name>
    <dbReference type="NCBI Taxonomy" id="425011"/>
    <lineage>
        <taxon>Eukaryota</taxon>
        <taxon>Fungi</taxon>
        <taxon>Dikarya</taxon>
        <taxon>Ascomycota</taxon>
        <taxon>Pezizomycotina</taxon>
        <taxon>Eurotiomycetes</taxon>
        <taxon>Eurotiomycetidae</taxon>
        <taxon>Eurotiales</taxon>
        <taxon>Aspergillaceae</taxon>
        <taxon>Aspergillus</taxon>
        <taxon>Aspergillus subgen. Circumdati</taxon>
    </lineage>
</organism>
<feature type="chain" id="PRO_0000295381" description="Polyadenylate-binding protein, cytoplasmic and nuclear">
    <location>
        <begin position="1"/>
        <end position="731"/>
    </location>
</feature>
<feature type="domain" description="RRM 1" evidence="2">
    <location>
        <begin position="54"/>
        <end position="132"/>
    </location>
</feature>
<feature type="domain" description="RRM 2" evidence="2">
    <location>
        <begin position="142"/>
        <end position="219"/>
    </location>
</feature>
<feature type="domain" description="RRM 3" evidence="2">
    <location>
        <begin position="235"/>
        <end position="312"/>
    </location>
</feature>
<feature type="domain" description="RRM 4" evidence="2">
    <location>
        <begin position="338"/>
        <end position="472"/>
    </location>
</feature>
<feature type="domain" description="PABC" evidence="3">
    <location>
        <begin position="658"/>
        <end position="731"/>
    </location>
</feature>
<feature type="region of interest" description="Disordered" evidence="4">
    <location>
        <begin position="1"/>
        <end position="51"/>
    </location>
</feature>
<feature type="region of interest" description="Disordered" evidence="4">
    <location>
        <begin position="369"/>
        <end position="429"/>
    </location>
</feature>
<feature type="region of interest" description="Disordered" evidence="4">
    <location>
        <begin position="603"/>
        <end position="665"/>
    </location>
</feature>
<feature type="compositionally biased region" description="Polar residues" evidence="4">
    <location>
        <begin position="1"/>
        <end position="10"/>
    </location>
</feature>
<feature type="compositionally biased region" description="Low complexity" evidence="4">
    <location>
        <begin position="17"/>
        <end position="39"/>
    </location>
</feature>
<feature type="compositionally biased region" description="Gly residues" evidence="4">
    <location>
        <begin position="616"/>
        <end position="627"/>
    </location>
</feature>
<feature type="compositionally biased region" description="Low complexity" evidence="4">
    <location>
        <begin position="645"/>
        <end position="656"/>
    </location>
</feature>
<dbReference type="EMBL" id="AM269955">
    <property type="protein sequence ID" value="CAK43671.1"/>
    <property type="molecule type" value="Genomic_DNA"/>
</dbReference>
<dbReference type="SMR" id="A2Q848"/>
<dbReference type="EnsemblFungi" id="CAK43671">
    <property type="protein sequence ID" value="CAK43671"/>
    <property type="gene ID" value="An01g03050"/>
</dbReference>
<dbReference type="VEuPathDB" id="FungiDB:An01g03050"/>
<dbReference type="HOGENOM" id="CLU_012062_22_4_1"/>
<dbReference type="Proteomes" id="UP000006706">
    <property type="component" value="Chromosome 2R"/>
</dbReference>
<dbReference type="GO" id="GO:0005737">
    <property type="term" value="C:cytoplasm"/>
    <property type="evidence" value="ECO:0007669"/>
    <property type="project" value="UniProtKB-SubCell"/>
</dbReference>
<dbReference type="GO" id="GO:0005634">
    <property type="term" value="C:nucleus"/>
    <property type="evidence" value="ECO:0007669"/>
    <property type="project" value="UniProtKB-SubCell"/>
</dbReference>
<dbReference type="GO" id="GO:0003723">
    <property type="term" value="F:RNA binding"/>
    <property type="evidence" value="ECO:0007669"/>
    <property type="project" value="UniProtKB-KW"/>
</dbReference>
<dbReference type="GO" id="GO:0006397">
    <property type="term" value="P:mRNA processing"/>
    <property type="evidence" value="ECO:0007669"/>
    <property type="project" value="UniProtKB-KW"/>
</dbReference>
<dbReference type="GO" id="GO:0051028">
    <property type="term" value="P:mRNA transport"/>
    <property type="evidence" value="ECO:0007669"/>
    <property type="project" value="UniProtKB-KW"/>
</dbReference>
<dbReference type="GO" id="GO:0006417">
    <property type="term" value="P:regulation of translation"/>
    <property type="evidence" value="ECO:0007669"/>
    <property type="project" value="UniProtKB-KW"/>
</dbReference>
<dbReference type="CDD" id="cd12378">
    <property type="entry name" value="RRM1_I_PABPs"/>
    <property type="match status" value="1"/>
</dbReference>
<dbReference type="CDD" id="cd12379">
    <property type="entry name" value="RRM2_I_PABPs"/>
    <property type="match status" value="1"/>
</dbReference>
<dbReference type="CDD" id="cd12380">
    <property type="entry name" value="RRM3_I_PABPs"/>
    <property type="match status" value="1"/>
</dbReference>
<dbReference type="CDD" id="cd12381">
    <property type="entry name" value="RRM4_I_PABPs"/>
    <property type="match status" value="1"/>
</dbReference>
<dbReference type="FunFam" id="3.30.70.330:FF:000003">
    <property type="entry name" value="Polyadenylate-binding protein"/>
    <property type="match status" value="1"/>
</dbReference>
<dbReference type="FunFam" id="3.30.70.330:FF:000355">
    <property type="entry name" value="Polyadenylate-binding protein"/>
    <property type="match status" value="1"/>
</dbReference>
<dbReference type="FunFam" id="3.30.70.330:FF:000384">
    <property type="entry name" value="Polyadenylate-binding protein"/>
    <property type="match status" value="1"/>
</dbReference>
<dbReference type="Gene3D" id="3.30.70.330">
    <property type="match status" value="4"/>
</dbReference>
<dbReference type="Gene3D" id="1.10.1900.10">
    <property type="entry name" value="c-terminal domain of poly(a) binding protein"/>
    <property type="match status" value="1"/>
</dbReference>
<dbReference type="InterPro" id="IPR012677">
    <property type="entry name" value="Nucleotide-bd_a/b_plait_sf"/>
</dbReference>
<dbReference type="InterPro" id="IPR036053">
    <property type="entry name" value="PABP-dom"/>
</dbReference>
<dbReference type="InterPro" id="IPR006515">
    <property type="entry name" value="PABP_1234"/>
</dbReference>
<dbReference type="InterPro" id="IPR002004">
    <property type="entry name" value="PABP_HYD_C"/>
</dbReference>
<dbReference type="InterPro" id="IPR034364">
    <property type="entry name" value="PABP_RRM1"/>
</dbReference>
<dbReference type="InterPro" id="IPR035979">
    <property type="entry name" value="RBD_domain_sf"/>
</dbReference>
<dbReference type="InterPro" id="IPR045305">
    <property type="entry name" value="RRM2_I_PABPs"/>
</dbReference>
<dbReference type="InterPro" id="IPR000504">
    <property type="entry name" value="RRM_dom"/>
</dbReference>
<dbReference type="NCBIfam" id="TIGR01628">
    <property type="entry name" value="PABP-1234"/>
    <property type="match status" value="1"/>
</dbReference>
<dbReference type="PANTHER" id="PTHR24012">
    <property type="entry name" value="RNA BINDING PROTEIN"/>
    <property type="match status" value="1"/>
</dbReference>
<dbReference type="Pfam" id="PF00658">
    <property type="entry name" value="MLLE"/>
    <property type="match status" value="1"/>
</dbReference>
<dbReference type="Pfam" id="PF00076">
    <property type="entry name" value="RRM_1"/>
    <property type="match status" value="5"/>
</dbReference>
<dbReference type="SMART" id="SM00517">
    <property type="entry name" value="PolyA"/>
    <property type="match status" value="1"/>
</dbReference>
<dbReference type="SMART" id="SM00360">
    <property type="entry name" value="RRM"/>
    <property type="match status" value="4"/>
</dbReference>
<dbReference type="SUPFAM" id="SSF63570">
    <property type="entry name" value="PABC (PABP) domain"/>
    <property type="match status" value="1"/>
</dbReference>
<dbReference type="SUPFAM" id="SSF54928">
    <property type="entry name" value="RNA-binding domain, RBD"/>
    <property type="match status" value="3"/>
</dbReference>
<dbReference type="PROSITE" id="PS51309">
    <property type="entry name" value="PABC"/>
    <property type="match status" value="1"/>
</dbReference>
<dbReference type="PROSITE" id="PS50102">
    <property type="entry name" value="RRM"/>
    <property type="match status" value="4"/>
</dbReference>
<keyword id="KW-0963">Cytoplasm</keyword>
<keyword id="KW-0507">mRNA processing</keyword>
<keyword id="KW-0509">mRNA transport</keyword>
<keyword id="KW-0539">Nucleus</keyword>
<keyword id="KW-1185">Reference proteome</keyword>
<keyword id="KW-0677">Repeat</keyword>
<keyword id="KW-0694">RNA-binding</keyword>
<keyword id="KW-0810">Translation regulation</keyword>
<keyword id="KW-0813">Transport</keyword>
<comment type="function">
    <text evidence="1">Binds the poly(A) tail of mRNA. Appears to be an important mediator of the multiple roles of the poly(A) tail in mRNA biogenesis, stability and translation. In the nucleus, involved in both mRNA cleavage and polyadenylation. Is also required for efficient mRNA export to the cytoplasm. Acts in concert with a poly(A)-specific nuclease (PAN) to affect poly(A) tail shortening, which may occur concomitantly with either nucleocytoplasmic mRNA transport or translational initiation. In the cytoplasm, stimulates translation initiation and regulates mRNA decay through translation termination-coupled poly(A) shortening, probably mediated by PAN (By similarity).</text>
</comment>
<comment type="subcellular location">
    <subcellularLocation>
        <location evidence="1">Cytoplasm</location>
    </subcellularLocation>
    <subcellularLocation>
        <location evidence="1">Nucleus</location>
    </subcellularLocation>
</comment>
<comment type="similarity">
    <text evidence="5">Belongs to the polyadenylate-binding protein type-1 family.</text>
</comment>
<protein>
    <recommendedName>
        <fullName>Polyadenylate-binding protein, cytoplasmic and nuclear</fullName>
        <shortName>PABP</shortName>
        <shortName>Poly(A)-binding protein</shortName>
    </recommendedName>
    <alternativeName>
        <fullName>Polyadenylate tail-binding protein</fullName>
    </alternativeName>
</protein>